<name>PROH2_APIME</name>
<keyword id="KW-0165">Cleavage on pair of basic residues</keyword>
<keyword id="KW-0903">Direct protein sequencing</keyword>
<keyword id="KW-1185">Reference proteome</keyword>
<keyword id="KW-0964">Secreted</keyword>
<keyword id="KW-0732">Signal</keyword>
<protein>
    <recommendedName>
        <fullName>Prohormone-2</fullName>
    </recommendedName>
    <component>
        <recommendedName>
            <fullName>Brain peptide NVPIYQEPRF</fullName>
        </recommendedName>
    </component>
    <component>
        <recommendedName>
            <fullName>Brain peptide VPIYQEPRF</fullName>
        </recommendedName>
    </component>
    <component>
        <recommendedName>
            <fullName>Brain peptide SQAYDPYSNAAQFQLSSQSRGYPYQHRLVY</fullName>
        </recommendedName>
    </component>
    <component>
        <recommendedName>
            <fullName>Brain peptide GYPYQHRLVY</fullName>
        </recommendedName>
    </component>
</protein>
<comment type="subcellular location">
    <subcellularLocation>
        <location evidence="4">Secreted</location>
    </subcellularLocation>
</comment>
<comment type="mass spectrometry" mass="1261.65" method="Electrospray" evidence="3">
    <molecule>Brain peptide NVPIYQEPRF</molecule>
</comment>
<comment type="mass spectrometry" mass="1147.6" method="Electrospray" evidence="3">
    <molecule>Brain peptide VPIYQEPRF</molecule>
</comment>
<comment type="mass spectrometry" mass="3523.56" method="Electrospray" evidence="3">
    <molecule>Brain peptide SQAYDPYSNAAQFQLSSQSRGYPYQHRLVY</molecule>
</comment>
<comment type="mass spectrometry" mass="1294.65" method="Electrospray" evidence="3">
    <molecule>Brain peptide GYPYQHRLVY</molecule>
</comment>
<feature type="signal peptide" evidence="1">
    <location>
        <begin position="1"/>
        <end position="21"/>
    </location>
</feature>
<feature type="propeptide" id="PRO_0000341470" evidence="3">
    <location>
        <begin position="22"/>
        <end position="177"/>
    </location>
</feature>
<feature type="peptide" id="PRO_0000341471" description="Brain peptide NVPIYQEPRF">
    <location>
        <begin position="180"/>
        <end position="189"/>
    </location>
</feature>
<feature type="peptide" id="PRO_0000341472" description="Brain peptide VPIYQEPRF">
    <location>
        <begin position="181"/>
        <end position="189"/>
    </location>
</feature>
<feature type="propeptide" id="PRO_0000341473" evidence="3">
    <location>
        <begin position="192"/>
        <end position="319"/>
    </location>
</feature>
<feature type="peptide" id="PRO_0000341474" description="Brain peptide SQAYDPYSNAAQFQLSSQSRGYPYQHRLVY">
    <location>
        <begin position="322"/>
        <end position="351"/>
    </location>
</feature>
<feature type="peptide" id="PRO_0000341475" description="Brain peptide GYPYQHRLVY">
    <location>
        <begin position="342"/>
        <end position="351"/>
    </location>
</feature>
<feature type="region of interest" description="Disordered" evidence="2">
    <location>
        <begin position="51"/>
        <end position="71"/>
    </location>
</feature>
<feature type="region of interest" description="Disordered" evidence="2">
    <location>
        <begin position="136"/>
        <end position="176"/>
    </location>
</feature>
<feature type="compositionally biased region" description="Polar residues" evidence="2">
    <location>
        <begin position="51"/>
        <end position="69"/>
    </location>
</feature>
<feature type="compositionally biased region" description="Basic and acidic residues" evidence="2">
    <location>
        <begin position="136"/>
        <end position="145"/>
    </location>
</feature>
<feature type="compositionally biased region" description="Low complexity" evidence="2">
    <location>
        <begin position="158"/>
        <end position="176"/>
    </location>
</feature>
<evidence type="ECO:0000255" key="1"/>
<evidence type="ECO:0000256" key="2">
    <source>
        <dbReference type="SAM" id="MobiDB-lite"/>
    </source>
</evidence>
<evidence type="ECO:0000269" key="3">
    <source>
    </source>
</evidence>
<evidence type="ECO:0000305" key="4"/>
<reference evidence="4" key="1">
    <citation type="submission" date="2010-11" db="EMBL/GenBank/DDBJ databases">
        <authorList>
            <consortium name="Honey bee genome project"/>
            <person name="Zhang L."/>
            <person name="Deng J."/>
            <person name="Wu Y.-Q."/>
            <person name="Kovar C."/>
            <person name="Aqrawi P."/>
            <person name="Bandaranaike D."/>
            <person name="Blankenburg K."/>
            <person name="Chen D."/>
            <person name="Denson S."/>
            <person name="Dinh H."/>
            <person name="Firestine M."/>
            <person name="Gross S."/>
            <person name="Han Y."/>
            <person name="Hernandez B."/>
            <person name="Holder M."/>
            <person name="Jackson L."/>
            <person name="Javaid M."/>
            <person name="Jing C."/>
            <person name="Jones J."/>
            <person name="Joshi V."/>
            <person name="Kamau G."/>
            <person name="Korchina V."/>
            <person name="Lee S."/>
            <person name="Lorensuhewa L."/>
            <person name="Mata R."/>
            <person name="Mathew T."/>
            <person name="Mims S."/>
            <person name="Ngo R."/>
            <person name="Nguyen L."/>
            <person name="Okwuonu G."/>
            <person name="Ongeri F."/>
            <person name="Osuji N."/>
            <person name="Pham C."/>
            <person name="Puazo M."/>
            <person name="Qu C."/>
            <person name="Quiroz J."/>
            <person name="Raj R."/>
            <person name="Rio Deiros D."/>
            <person name="Santibanez J."/>
            <person name="Scheel M."/>
            <person name="Scherer S."/>
            <person name="Vee V."/>
            <person name="Wang M."/>
            <person name="Xin Y."/>
            <person name="Richards S."/>
            <person name="Reid J.G."/>
            <person name="Newsham I."/>
            <person name="Worley K.C."/>
            <person name="Muzny D.M."/>
            <person name="Gibbs R."/>
        </authorList>
    </citation>
    <scope>NUCLEOTIDE SEQUENCE [LARGE SCALE GENOMIC DNA]</scope>
    <source>
        <strain>DH4</strain>
    </source>
</reference>
<reference evidence="4" key="2">
    <citation type="journal article" date="2006" name="Science">
        <title>From the genome to the proteome: uncovering peptides in the Apis brain.</title>
        <authorList>
            <person name="Hummon A.B."/>
            <person name="Richmond T.A."/>
            <person name="Verleyen P."/>
            <person name="Baggerman G."/>
            <person name="Huybrechts J."/>
            <person name="Ewing M.A."/>
            <person name="Vierstraete E."/>
            <person name="Rodriguez-Zas S.L."/>
            <person name="Schoofs L."/>
            <person name="Robinson G.E."/>
            <person name="Sweedler J.V."/>
        </authorList>
    </citation>
    <scope>PROTEIN SEQUENCE OF 180-189 AND 322-351</scope>
    <scope>MASS SPECTROMETRY</scope>
    <source>
        <tissue evidence="3">Brain</tissue>
    </source>
</reference>
<accession>P85799</accession>
<organism>
    <name type="scientific">Apis mellifera</name>
    <name type="common">Honeybee</name>
    <dbReference type="NCBI Taxonomy" id="7460"/>
    <lineage>
        <taxon>Eukaryota</taxon>
        <taxon>Metazoa</taxon>
        <taxon>Ecdysozoa</taxon>
        <taxon>Arthropoda</taxon>
        <taxon>Hexapoda</taxon>
        <taxon>Insecta</taxon>
        <taxon>Pterygota</taxon>
        <taxon>Neoptera</taxon>
        <taxon>Endopterygota</taxon>
        <taxon>Hymenoptera</taxon>
        <taxon>Apocrita</taxon>
        <taxon>Aculeata</taxon>
        <taxon>Apoidea</taxon>
        <taxon>Anthophila</taxon>
        <taxon>Apidae</taxon>
        <taxon>Apis</taxon>
    </lineage>
</organism>
<dbReference type="EMBL" id="AADG06001790">
    <property type="status" value="NOT_ANNOTATED_CDS"/>
    <property type="molecule type" value="Genomic_DNA"/>
</dbReference>
<dbReference type="RefSeq" id="NP_001161308.1">
    <property type="nucleotide sequence ID" value="NM_001167836.2"/>
</dbReference>
<dbReference type="STRING" id="7460.P85799"/>
<dbReference type="PaxDb" id="7460-GB44988-PA"/>
<dbReference type="EnsemblMetazoa" id="NM_001167836">
    <property type="protein sequence ID" value="NP_001161308"/>
    <property type="gene ID" value="LOC409314"/>
</dbReference>
<dbReference type="GeneID" id="409314"/>
<dbReference type="KEGG" id="ame:409314"/>
<dbReference type="eggNOG" id="ENOG502SEH3">
    <property type="taxonomic scope" value="Eukaryota"/>
</dbReference>
<dbReference type="HOGENOM" id="CLU_067916_0_0_1"/>
<dbReference type="InParanoid" id="P85799"/>
<dbReference type="OMA" id="AQEMLMF"/>
<dbReference type="OrthoDB" id="8188268at2759"/>
<dbReference type="PhylomeDB" id="P85799"/>
<dbReference type="Proteomes" id="UP000005203">
    <property type="component" value="Linkage group LG11"/>
</dbReference>
<dbReference type="GO" id="GO:0005576">
    <property type="term" value="C:extracellular region"/>
    <property type="evidence" value="ECO:0007669"/>
    <property type="project" value="UniProtKB-SubCell"/>
</dbReference>
<proteinExistence type="evidence at protein level"/>
<sequence length="351" mass="40985">MMCDWVWLLLTLCSLLMIVQSLPTNLAEDTKKTEQTMRPKSKRAQEMLMFGNQQNHQPENNPSSSYSSTAEKRTLAASGLGGLKAALIEEEKPSRSNTLNNAFYDRKNYDYGAVNELGYEIPQVWDNSPYSRYYTNEDRRKRSEKSAVASGSSTTIKPSTTSFQSPTSTQQSVQTQVKRNVPIYQEPRFKRELDIDPEDVLTLLSLWENERRKRNWHKYMNEEYENVDDEDNLLEEEDSRNIIPWMDSSVYPPRHYSLDSLSPSDIGIIRTHPSSYYEQYENQYGQQYDTSQYGSPQYGLVYPQQTYYSAPEKRFMISRKRSQAYDPYSNAAQFQLSSQSRGYPYQHRLVY</sequence>